<reference key="1">
    <citation type="submission" date="2001-06" db="EMBL/GenBank/DDBJ databases">
        <title>Mouse aldolase B (aldo2) genomic sequence of the open reading frame including first poly A site and signals.</title>
        <authorList>
            <person name="Funari V.A."/>
            <person name="Tolan D.R."/>
        </authorList>
    </citation>
    <scope>NUCLEOTIDE SEQUENCE [GENOMIC DNA]</scope>
    <source>
        <strain>129/Sv</strain>
    </source>
</reference>
<reference key="2">
    <citation type="journal article" date="2004" name="Genome Res.">
        <title>The status, quality, and expansion of the NIH full-length cDNA project: the Mammalian Gene Collection (MGC).</title>
        <authorList>
            <consortium name="The MGC Project Team"/>
        </authorList>
    </citation>
    <scope>NUCLEOTIDE SEQUENCE [LARGE SCALE MRNA]</scope>
    <source>
        <strain>FVB/N</strain>
        <tissue>Colon</tissue>
        <tissue>Kidney</tissue>
        <tissue>Liver</tissue>
    </source>
</reference>
<reference key="3">
    <citation type="submission" date="2006-03" db="UniProtKB">
        <authorList>
            <person name="Kanor S."/>
            <person name="Quadroni M."/>
            <person name="Bienvenut W.V."/>
        </authorList>
    </citation>
    <scope>PROTEIN SEQUENCE OF 2-12 AND 108-120</scope>
    <scope>CLEAVAGE OF INITIATOR METHIONINE</scope>
    <scope>ACETYLATION AT ALA-2</scope>
    <scope>IDENTIFICATION BY MASS SPECTROMETRY</scope>
    <source>
        <strain>C57BL/6J</strain>
        <tissue>Skeletal muscle</tissue>
    </source>
</reference>
<reference key="4">
    <citation type="journal article" date="2007" name="Proc. Natl. Acad. Sci. U.S.A.">
        <title>Large-scale phosphorylation analysis of mouse liver.</title>
        <authorList>
            <person name="Villen J."/>
            <person name="Beausoleil S.A."/>
            <person name="Gerber S.A."/>
            <person name="Gygi S.P."/>
        </authorList>
    </citation>
    <scope>PHOSPHORYLATION [LARGE SCALE ANALYSIS] AT SER-36 AND THR-39</scope>
    <scope>IDENTIFICATION BY MASS SPECTROMETRY [LARGE SCALE ANALYSIS]</scope>
    <source>
        <tissue>Liver</tissue>
    </source>
</reference>
<reference key="5">
    <citation type="journal article" date="2010" name="Cell">
        <title>A tissue-specific atlas of mouse protein phosphorylation and expression.</title>
        <authorList>
            <person name="Huttlin E.L."/>
            <person name="Jedrychowski M.P."/>
            <person name="Elias J.E."/>
            <person name="Goswami T."/>
            <person name="Rad R."/>
            <person name="Beausoleil S.A."/>
            <person name="Villen J."/>
            <person name="Haas W."/>
            <person name="Sowa M.E."/>
            <person name="Gygi S.P."/>
        </authorList>
    </citation>
    <scope>PHOSPHORYLATION [LARGE SCALE ANALYSIS] AT SER-36; THR-39 AND SER-206</scope>
    <scope>IDENTIFICATION BY MASS SPECTROMETRY [LARGE SCALE ANALYSIS]</scope>
    <source>
        <tissue>Brown adipose tissue</tissue>
        <tissue>Heart</tissue>
        <tissue>Kidney</tissue>
        <tissue>Liver</tissue>
    </source>
</reference>
<reference key="6">
    <citation type="journal article" date="2013" name="Mol. Cell">
        <title>SIRT5-mediated lysine desuccinylation impacts diverse metabolic pathways.</title>
        <authorList>
            <person name="Park J."/>
            <person name="Chen Y."/>
            <person name="Tishkoff D.X."/>
            <person name="Peng C."/>
            <person name="Tan M."/>
            <person name="Dai L."/>
            <person name="Xie Z."/>
            <person name="Zhang Y."/>
            <person name="Zwaans B.M."/>
            <person name="Skinner M.E."/>
            <person name="Lombard D.B."/>
            <person name="Zhao Y."/>
        </authorList>
    </citation>
    <scope>SUCCINYLATION [LARGE SCALE ANALYSIS] AT LYS-13; LYS-121 AND LYS-317</scope>
    <scope>IDENTIFICATION BY MASS SPECTROMETRY [LARGE SCALE ANALYSIS]</scope>
    <source>
        <tissue>Liver</tissue>
    </source>
</reference>
<reference key="7">
    <citation type="journal article" date="2015" name="Mol. Genet. Metab.">
        <title>Aldolase-B knockout in mice phenocopies hereditary fructose intolerance in humans.</title>
        <authorList>
            <person name="Oppelt S.A."/>
            <person name="Sennott E.M."/>
            <person name="Tolan D.R."/>
        </authorList>
    </citation>
    <scope>DISRUPTION PHENOTYPE</scope>
    <scope>FUNCTION</scope>
    <scope>CATALYTIC ACTIVITY</scope>
    <scope>PATHWAY</scope>
</reference>
<reference key="8">
    <citation type="journal article" date="2020" name="Nat. Cancer">
        <title>Aldolase B suppresses hepatocellular carcinogenesis by inhibiting G6PD and pentose phosphate pathways.</title>
        <authorList>
            <person name="Li M."/>
            <person name="He X."/>
            <person name="Guo W."/>
            <person name="Yu H."/>
            <person name="Zhang S."/>
            <person name="Wang N."/>
            <person name="Liu G."/>
            <person name="Sa R."/>
            <person name="Shen X."/>
            <person name="Jiang Y."/>
            <person name="Tang Y."/>
            <person name="Zhuo Y."/>
            <person name="Yin C."/>
            <person name="Tu Q."/>
            <person name="Li N."/>
            <person name="Nie X."/>
            <person name="Li Y."/>
            <person name="Hu Z."/>
            <person name="Zhu H."/>
            <person name="Ding J."/>
            <person name="Li Z."/>
            <person name="Liu T."/>
            <person name="Zhang F."/>
            <person name="Zhou H."/>
            <person name="Li S."/>
            <person name="Yue J."/>
            <person name="Yan Z."/>
            <person name="Cheng S."/>
            <person name="Tao Y."/>
            <person name="Yin H."/>
        </authorList>
    </citation>
    <scope>FUNCTION</scope>
    <scope>INTERACTION WITH G6PD AND TP53</scope>
</reference>
<accession>Q91Y97</accession>
<accession>Q8K034</accession>
<accession>Q91W73</accession>
<evidence type="ECO:0000250" key="1">
    <source>
        <dbReference type="UniProtKB" id="P00883"/>
    </source>
</evidence>
<evidence type="ECO:0000250" key="2">
    <source>
        <dbReference type="UniProtKB" id="P00884"/>
    </source>
</evidence>
<evidence type="ECO:0000250" key="3">
    <source>
        <dbReference type="UniProtKB" id="P05062"/>
    </source>
</evidence>
<evidence type="ECO:0000269" key="4">
    <source>
    </source>
</evidence>
<evidence type="ECO:0000269" key="5">
    <source>
    </source>
</evidence>
<evidence type="ECO:0000269" key="6">
    <source ref="3"/>
</evidence>
<evidence type="ECO:0000305" key="7"/>
<evidence type="ECO:0000305" key="8">
    <source>
    </source>
</evidence>
<evidence type="ECO:0000312" key="9">
    <source>
        <dbReference type="MGI" id="MGI:87995"/>
    </source>
</evidence>
<evidence type="ECO:0007744" key="10">
    <source>
    </source>
</evidence>
<evidence type="ECO:0007744" key="11">
    <source>
    </source>
</evidence>
<evidence type="ECO:0007744" key="12">
    <source>
    </source>
</evidence>
<protein>
    <recommendedName>
        <fullName>Fructose-bisphosphate aldolase B</fullName>
        <ecNumber evidence="4">4.1.2.13</ecNumber>
    </recommendedName>
    <alternativeName>
        <fullName>Aldolase 2</fullName>
    </alternativeName>
    <alternativeName>
        <fullName>Liver-type aldolase</fullName>
    </alternativeName>
</protein>
<organism>
    <name type="scientific">Mus musculus</name>
    <name type="common">Mouse</name>
    <dbReference type="NCBI Taxonomy" id="10090"/>
    <lineage>
        <taxon>Eukaryota</taxon>
        <taxon>Metazoa</taxon>
        <taxon>Chordata</taxon>
        <taxon>Craniata</taxon>
        <taxon>Vertebrata</taxon>
        <taxon>Euteleostomi</taxon>
        <taxon>Mammalia</taxon>
        <taxon>Eutheria</taxon>
        <taxon>Euarchontoglires</taxon>
        <taxon>Glires</taxon>
        <taxon>Rodentia</taxon>
        <taxon>Myomorpha</taxon>
        <taxon>Muroidea</taxon>
        <taxon>Muridae</taxon>
        <taxon>Murinae</taxon>
        <taxon>Mus</taxon>
        <taxon>Mus</taxon>
    </lineage>
</organism>
<keyword id="KW-0007">Acetylation</keyword>
<keyword id="KW-0963">Cytoplasm</keyword>
<keyword id="KW-0206">Cytoskeleton</keyword>
<keyword id="KW-0903">Direct protein sequencing</keyword>
<keyword id="KW-0324">Glycolysis</keyword>
<keyword id="KW-0456">Lyase</keyword>
<keyword id="KW-0597">Phosphoprotein</keyword>
<keyword id="KW-1185">Reference proteome</keyword>
<keyword id="KW-0704">Schiff base</keyword>
<dbReference type="EC" id="4.1.2.13" evidence="4"/>
<dbReference type="EMBL" id="AF403567">
    <property type="protein sequence ID" value="AAL06323.1"/>
    <property type="molecule type" value="Genomic_DNA"/>
</dbReference>
<dbReference type="EMBL" id="AF403565">
    <property type="protein sequence ID" value="AAL06323.1"/>
    <property type="status" value="JOINED"/>
    <property type="molecule type" value="Genomic_DNA"/>
</dbReference>
<dbReference type="EMBL" id="AF403566">
    <property type="protein sequence ID" value="AAL06323.1"/>
    <property type="status" value="JOINED"/>
    <property type="molecule type" value="Genomic_DNA"/>
</dbReference>
<dbReference type="EMBL" id="BC016435">
    <property type="protein sequence ID" value="AAH16435.1"/>
    <property type="molecule type" value="mRNA"/>
</dbReference>
<dbReference type="EMBL" id="BC022113">
    <property type="protein sequence ID" value="AAH22113.1"/>
    <property type="molecule type" value="mRNA"/>
</dbReference>
<dbReference type="EMBL" id="BC024056">
    <property type="protein sequence ID" value="AAH24056.1"/>
    <property type="molecule type" value="mRNA"/>
</dbReference>
<dbReference type="EMBL" id="BC024112">
    <property type="protein sequence ID" value="AAH24112.1"/>
    <property type="molecule type" value="mRNA"/>
</dbReference>
<dbReference type="EMBL" id="BC026577">
    <property type="protein sequence ID" value="AAH26577.1"/>
    <property type="molecule type" value="mRNA"/>
</dbReference>
<dbReference type="EMBL" id="BC030724">
    <property type="protein sequence ID" value="AAH30724.1"/>
    <property type="molecule type" value="mRNA"/>
</dbReference>
<dbReference type="EMBL" id="BC030725">
    <property type="protein sequence ID" value="AAH30725.1"/>
    <property type="molecule type" value="mRNA"/>
</dbReference>
<dbReference type="EMBL" id="BC034169">
    <property type="protein sequence ID" value="AAH34169.1"/>
    <property type="molecule type" value="mRNA"/>
</dbReference>
<dbReference type="EMBL" id="BC034171">
    <property type="protein sequence ID" value="AAH34171.1"/>
    <property type="molecule type" value="mRNA"/>
</dbReference>
<dbReference type="EMBL" id="BC034172">
    <property type="protein sequence ID" value="AAH34172.1"/>
    <property type="molecule type" value="mRNA"/>
</dbReference>
<dbReference type="EMBL" id="BC034173">
    <property type="protein sequence ID" value="AAH34173.1"/>
    <property type="molecule type" value="mRNA"/>
</dbReference>
<dbReference type="EMBL" id="BC036130">
    <property type="protein sequence ID" value="AAH36130.1"/>
    <property type="molecule type" value="mRNA"/>
</dbReference>
<dbReference type="EMBL" id="BC036131">
    <property type="protein sequence ID" value="AAH36131.1"/>
    <property type="molecule type" value="mRNA"/>
</dbReference>
<dbReference type="EMBL" id="BC036132">
    <property type="protein sequence ID" value="AAH36132.1"/>
    <property type="molecule type" value="mRNA"/>
</dbReference>
<dbReference type="EMBL" id="BC036133">
    <property type="protein sequence ID" value="AAH36133.1"/>
    <property type="molecule type" value="mRNA"/>
</dbReference>
<dbReference type="CCDS" id="CCDS18176.1"/>
<dbReference type="RefSeq" id="NP_659152.1">
    <property type="nucleotide sequence ID" value="NM_144903.3"/>
</dbReference>
<dbReference type="SMR" id="Q91Y97"/>
<dbReference type="BioGRID" id="230944">
    <property type="interactions" value="1"/>
</dbReference>
<dbReference type="CORUM" id="Q91Y97"/>
<dbReference type="FunCoup" id="Q91Y97">
    <property type="interactions" value="891"/>
</dbReference>
<dbReference type="STRING" id="10090.ENSMUSP00000029987"/>
<dbReference type="CarbonylDB" id="Q91Y97"/>
<dbReference type="GlyGen" id="Q91Y97">
    <property type="glycosylation" value="1 site, 1 O-linked glycan (1 site)"/>
</dbReference>
<dbReference type="iPTMnet" id="Q91Y97"/>
<dbReference type="MetOSite" id="Q91Y97"/>
<dbReference type="PhosphoSitePlus" id="Q91Y97"/>
<dbReference type="SwissPalm" id="Q91Y97"/>
<dbReference type="CPTAC" id="non-CPTAC-3333"/>
<dbReference type="CPTAC" id="non-CPTAC-3334"/>
<dbReference type="jPOST" id="Q91Y97"/>
<dbReference type="PaxDb" id="10090-ENSMUSP00000029987"/>
<dbReference type="PeptideAtlas" id="Q91Y97"/>
<dbReference type="ProteomicsDB" id="285809"/>
<dbReference type="Pumba" id="Q91Y97"/>
<dbReference type="Antibodypedia" id="1025">
    <property type="antibodies" value="416 antibodies from 33 providers"/>
</dbReference>
<dbReference type="DNASU" id="230163"/>
<dbReference type="Ensembl" id="ENSMUST00000029987.10">
    <property type="protein sequence ID" value="ENSMUSP00000029987.10"/>
    <property type="gene ID" value="ENSMUSG00000028307.10"/>
</dbReference>
<dbReference type="GeneID" id="230163"/>
<dbReference type="KEGG" id="mmu:230163"/>
<dbReference type="UCSC" id="uc008svw.1">
    <property type="organism name" value="mouse"/>
</dbReference>
<dbReference type="AGR" id="MGI:87995"/>
<dbReference type="CTD" id="229"/>
<dbReference type="MGI" id="MGI:87995">
    <property type="gene designation" value="Aldob"/>
</dbReference>
<dbReference type="VEuPathDB" id="HostDB:ENSMUSG00000028307"/>
<dbReference type="eggNOG" id="KOG1557">
    <property type="taxonomic scope" value="Eukaryota"/>
</dbReference>
<dbReference type="GeneTree" id="ENSGT00950000182987"/>
<dbReference type="HOGENOM" id="CLU_031243_0_0_1"/>
<dbReference type="InParanoid" id="Q91Y97"/>
<dbReference type="OMA" id="CKGQYVT"/>
<dbReference type="OrthoDB" id="36455at2759"/>
<dbReference type="PhylomeDB" id="Q91Y97"/>
<dbReference type="TreeFam" id="TF314203"/>
<dbReference type="Reactome" id="R-MMU-70171">
    <property type="pathway name" value="Glycolysis"/>
</dbReference>
<dbReference type="Reactome" id="R-MMU-70263">
    <property type="pathway name" value="Gluconeogenesis"/>
</dbReference>
<dbReference type="Reactome" id="R-MMU-70350">
    <property type="pathway name" value="Fructose catabolism"/>
</dbReference>
<dbReference type="UniPathway" id="UPA00109">
    <property type="reaction ID" value="UER00183"/>
</dbReference>
<dbReference type="UniPathway" id="UPA00138"/>
<dbReference type="UniPathway" id="UPA00202"/>
<dbReference type="BioGRID-ORCS" id="230163">
    <property type="hits" value="2 hits in 76 CRISPR screens"/>
</dbReference>
<dbReference type="ChiTaRS" id="Aldob">
    <property type="organism name" value="mouse"/>
</dbReference>
<dbReference type="PRO" id="PR:Q91Y97"/>
<dbReference type="Proteomes" id="UP000000589">
    <property type="component" value="Chromosome 4"/>
</dbReference>
<dbReference type="RNAct" id="Q91Y97">
    <property type="molecule type" value="protein"/>
</dbReference>
<dbReference type="Bgee" id="ENSMUSG00000028307">
    <property type="expression patterns" value="Expressed in right kidney and 111 other cell types or tissues"/>
</dbReference>
<dbReference type="ExpressionAtlas" id="Q91Y97">
    <property type="expression patterns" value="baseline and differential"/>
</dbReference>
<dbReference type="GO" id="GO:0034451">
    <property type="term" value="C:centriolar satellite"/>
    <property type="evidence" value="ECO:0007669"/>
    <property type="project" value="UniProtKB-SubCell"/>
</dbReference>
<dbReference type="GO" id="GO:0005829">
    <property type="term" value="C:cytosol"/>
    <property type="evidence" value="ECO:0000314"/>
    <property type="project" value="MGI"/>
</dbReference>
<dbReference type="GO" id="GO:0051117">
    <property type="term" value="F:ATPase binding"/>
    <property type="evidence" value="ECO:0007669"/>
    <property type="project" value="Ensembl"/>
</dbReference>
<dbReference type="GO" id="GO:0008092">
    <property type="term" value="F:cytoskeletal protein binding"/>
    <property type="evidence" value="ECO:0007669"/>
    <property type="project" value="Ensembl"/>
</dbReference>
<dbReference type="GO" id="GO:0070061">
    <property type="term" value="F:fructose binding"/>
    <property type="evidence" value="ECO:0007669"/>
    <property type="project" value="Ensembl"/>
</dbReference>
<dbReference type="GO" id="GO:0061609">
    <property type="term" value="F:fructose-1-phosphate aldolase activity"/>
    <property type="evidence" value="ECO:0000315"/>
    <property type="project" value="MGI"/>
</dbReference>
<dbReference type="GO" id="GO:0004332">
    <property type="term" value="F:fructose-bisphosphate aldolase activity"/>
    <property type="evidence" value="ECO:0000314"/>
    <property type="project" value="MGI"/>
</dbReference>
<dbReference type="GO" id="GO:0042802">
    <property type="term" value="F:identical protein binding"/>
    <property type="evidence" value="ECO:0007669"/>
    <property type="project" value="Ensembl"/>
</dbReference>
<dbReference type="GO" id="GO:0060090">
    <property type="term" value="F:molecular adaptor activity"/>
    <property type="evidence" value="ECO:0007669"/>
    <property type="project" value="Ensembl"/>
</dbReference>
<dbReference type="GO" id="GO:0030388">
    <property type="term" value="P:fructose 1,6-bisphosphate metabolic process"/>
    <property type="evidence" value="ECO:0007669"/>
    <property type="project" value="Ensembl"/>
</dbReference>
<dbReference type="GO" id="GO:0006001">
    <property type="term" value="P:fructose catabolic process"/>
    <property type="evidence" value="ECO:0000314"/>
    <property type="project" value="MGI"/>
</dbReference>
<dbReference type="GO" id="GO:0061624">
    <property type="term" value="P:fructose catabolic process to hydroxyacetone phosphate and glyceraldehyde-3-phosphate"/>
    <property type="evidence" value="ECO:0000315"/>
    <property type="project" value="MGI"/>
</dbReference>
<dbReference type="GO" id="GO:0006094">
    <property type="term" value="P:gluconeogenesis"/>
    <property type="evidence" value="ECO:0007669"/>
    <property type="project" value="UniProtKB-UniPathway"/>
</dbReference>
<dbReference type="GO" id="GO:0006096">
    <property type="term" value="P:glycolytic process"/>
    <property type="evidence" value="ECO:0000250"/>
    <property type="project" value="UniProtKB"/>
</dbReference>
<dbReference type="GO" id="GO:0061625">
    <property type="term" value="P:glycolytic process through fructose-1-phosphate"/>
    <property type="evidence" value="ECO:0000305"/>
    <property type="project" value="MGI"/>
</dbReference>
<dbReference type="GO" id="GO:0061615">
    <property type="term" value="P:glycolytic process through fructose-6-phosphate"/>
    <property type="evidence" value="ECO:0000305"/>
    <property type="project" value="MGI"/>
</dbReference>
<dbReference type="GO" id="GO:1905856">
    <property type="term" value="P:negative regulation of pentose-phosphate shunt"/>
    <property type="evidence" value="ECO:0007669"/>
    <property type="project" value="Ensembl"/>
</dbReference>
<dbReference type="GO" id="GO:0070072">
    <property type="term" value="P:vacuolar proton-transporting V-type ATPase complex assembly"/>
    <property type="evidence" value="ECO:0007669"/>
    <property type="project" value="Ensembl"/>
</dbReference>
<dbReference type="CDD" id="cd00948">
    <property type="entry name" value="FBP_aldolase_I_a"/>
    <property type="match status" value="1"/>
</dbReference>
<dbReference type="FunFam" id="3.20.20.70:FF:000021">
    <property type="entry name" value="Fructose-bisphosphate aldolase"/>
    <property type="match status" value="1"/>
</dbReference>
<dbReference type="Gene3D" id="3.20.20.70">
    <property type="entry name" value="Aldolase class I"/>
    <property type="match status" value="1"/>
</dbReference>
<dbReference type="InterPro" id="IPR029768">
    <property type="entry name" value="Aldolase_I_AS"/>
</dbReference>
<dbReference type="InterPro" id="IPR013785">
    <property type="entry name" value="Aldolase_TIM"/>
</dbReference>
<dbReference type="InterPro" id="IPR000741">
    <property type="entry name" value="FBA_I"/>
</dbReference>
<dbReference type="NCBIfam" id="NF033379">
    <property type="entry name" value="FrucBisAld_I"/>
    <property type="match status" value="1"/>
</dbReference>
<dbReference type="PANTHER" id="PTHR11627">
    <property type="entry name" value="FRUCTOSE-BISPHOSPHATE ALDOLASE"/>
    <property type="match status" value="1"/>
</dbReference>
<dbReference type="Pfam" id="PF00274">
    <property type="entry name" value="Glycolytic"/>
    <property type="match status" value="1"/>
</dbReference>
<dbReference type="SUPFAM" id="SSF51569">
    <property type="entry name" value="Aldolase"/>
    <property type="match status" value="1"/>
</dbReference>
<dbReference type="PROSITE" id="PS00158">
    <property type="entry name" value="ALDOLASE_CLASS_I"/>
    <property type="match status" value="1"/>
</dbReference>
<comment type="function">
    <text evidence="4 5">Catalyzes the aldol cleavage of fructose 1,6-biphosphate to form two triosephosphates dihydroxyacetone phosphate and D-glyceraldehyde 3-phosphate in glycolysis as well as the reverse stereospecific aldol addition reaction in gluconeogenesis. In fructolysis, metabolizes fructose 1-phosphate derived from the phosphorylation of dietary fructose by fructokinase into dihydroxyacetone phosphate and D-glyceraldehyde (PubMed:25637246). Acts as an adapter independently of its enzymatic activity, exerts a tumor suppressor role by stabilizing the ternary complex with G6PD and TP53 to inhibit G6PD activity and keep oxidative pentose phosphate metabolism in check (PubMed:35122041).</text>
</comment>
<comment type="catalytic activity">
    <reaction evidence="4">
        <text>beta-D-fructose 1,6-bisphosphate = D-glyceraldehyde 3-phosphate + dihydroxyacetone phosphate</text>
        <dbReference type="Rhea" id="RHEA:14729"/>
        <dbReference type="ChEBI" id="CHEBI:32966"/>
        <dbReference type="ChEBI" id="CHEBI:57642"/>
        <dbReference type="ChEBI" id="CHEBI:59776"/>
        <dbReference type="EC" id="4.1.2.13"/>
    </reaction>
    <physiologicalReaction direction="left-to-right" evidence="8">
        <dbReference type="Rhea" id="RHEA:14730"/>
    </physiologicalReaction>
    <physiologicalReaction direction="right-to-left" evidence="8">
        <dbReference type="Rhea" id="RHEA:14731"/>
    </physiologicalReaction>
</comment>
<comment type="catalytic activity">
    <reaction evidence="4">
        <text>beta-D-fructose 1-phosphate = D-glyceraldehyde + dihydroxyacetone phosphate</text>
        <dbReference type="Rhea" id="RHEA:30851"/>
        <dbReference type="ChEBI" id="CHEBI:17378"/>
        <dbReference type="ChEBI" id="CHEBI:57642"/>
        <dbReference type="ChEBI" id="CHEBI:138881"/>
    </reaction>
    <physiologicalReaction direction="left-to-right" evidence="8">
        <dbReference type="Rhea" id="RHEA:30852"/>
    </physiologicalReaction>
    <physiologicalReaction direction="right-to-left" evidence="8">
        <dbReference type="Rhea" id="RHEA:30853"/>
    </physiologicalReaction>
</comment>
<comment type="pathway">
    <text evidence="8">Carbohydrate degradation; glycolysis; D-glyceraldehyde 3-phosphate and glycerone phosphate from D-glucose: step 4/4.</text>
</comment>
<comment type="pathway">
    <text evidence="8">Carbohydrate biosynthesis; gluconeogenesis.</text>
</comment>
<comment type="pathway">
    <text evidence="4">Carbohydrate metabolism; fructose metabolism.</text>
</comment>
<comment type="subunit">
    <text evidence="5">Homotetramer. Interacts with BBS1, BBS2, BBS4 and BBS7. Forms a ternary complex with G6PD and TP53; this interaction is direct.</text>
</comment>
<comment type="subcellular location">
    <subcellularLocation>
        <location evidence="3">Cytoplasm</location>
        <location evidence="3">Cytosol</location>
    </subcellularLocation>
    <subcellularLocation>
        <location evidence="3">Cytoplasm</location>
        <location evidence="3">Cytoskeleton</location>
        <location evidence="3">Microtubule organizing center</location>
        <location evidence="3">Centrosome</location>
        <location evidence="3">Centriolar satellite</location>
    </subcellularLocation>
</comment>
<comment type="disruption phenotype">
    <text evidence="4">Mice are born at the expected Mendelian rate. On a fructose diet, they develop fructose intolerance associated with hepatic steatosis and mortality.</text>
</comment>
<comment type="miscellaneous">
    <text>In vertebrates, 3 forms of this ubiquitous glycolytic enzyme are found, aldolase A in muscle, aldolase B in liver and aldolase C in brain.</text>
</comment>
<comment type="similarity">
    <text evidence="7">Belongs to the class I fructose-bisphosphate aldolase family.</text>
</comment>
<name>ALDOB_MOUSE</name>
<feature type="initiator methionine" description="Removed" evidence="6">
    <location>
        <position position="1"/>
    </location>
</feature>
<feature type="chain" id="PRO_0000216941" description="Fructose-bisphosphate aldolase B">
    <location>
        <begin position="2"/>
        <end position="364"/>
    </location>
</feature>
<feature type="active site" description="Proton acceptor" evidence="1">
    <location>
        <position position="188"/>
    </location>
</feature>
<feature type="active site" description="Schiff-base intermediate with dihydroxyacetone-P" evidence="1">
    <location>
        <position position="230"/>
    </location>
</feature>
<feature type="binding site" evidence="1">
    <location>
        <position position="43"/>
    </location>
    <ligand>
        <name>beta-D-fructose 1,6-bisphosphate</name>
        <dbReference type="ChEBI" id="CHEBI:32966"/>
    </ligand>
</feature>
<feature type="binding site" evidence="1">
    <location>
        <begin position="272"/>
        <end position="274"/>
    </location>
    <ligand>
        <name>beta-D-fructose 1,6-bisphosphate</name>
        <dbReference type="ChEBI" id="CHEBI:32966"/>
    </ligand>
</feature>
<feature type="binding site" evidence="1">
    <location>
        <position position="304"/>
    </location>
    <ligand>
        <name>beta-D-fructose 1,6-bisphosphate</name>
        <dbReference type="ChEBI" id="CHEBI:32966"/>
    </ligand>
</feature>
<feature type="site" description="Necessary for preference for fructose 1,6-bisphosphate over fructose 1-phosphate" evidence="1">
    <location>
        <position position="364"/>
    </location>
</feature>
<feature type="modified residue" description="N-acetylalanine" evidence="6">
    <location>
        <position position="2"/>
    </location>
</feature>
<feature type="modified residue" description="N6-succinyllysine" evidence="12">
    <location>
        <position position="13"/>
    </location>
</feature>
<feature type="modified residue" description="Phosphoserine" evidence="10 11">
    <location>
        <position position="36"/>
    </location>
</feature>
<feature type="modified residue" description="Phosphothreonine" evidence="10 11">
    <location>
        <position position="39"/>
    </location>
</feature>
<feature type="modified residue" description="Phosphoserine" evidence="3">
    <location>
        <position position="89"/>
    </location>
</feature>
<feature type="modified residue" description="Phosphothreonine" evidence="3">
    <location>
        <position position="119"/>
    </location>
</feature>
<feature type="modified residue" description="N6-succinyllysine" evidence="12">
    <location>
        <position position="121"/>
    </location>
</feature>
<feature type="modified residue" description="Phosphoserine" evidence="3">
    <location>
        <position position="132"/>
    </location>
</feature>
<feature type="modified residue" description="Phosphoserine" evidence="11">
    <location>
        <position position="206"/>
    </location>
</feature>
<feature type="modified residue" description="Phosphoserine" evidence="3">
    <location>
        <position position="272"/>
    </location>
</feature>
<feature type="modified residue" description="Phosphoserine" evidence="3">
    <location>
        <position position="276"/>
    </location>
</feature>
<feature type="modified residue" description="Phosphoserine" evidence="2">
    <location>
        <position position="299"/>
    </location>
</feature>
<feature type="modified residue" description="Phosphoserine" evidence="2">
    <location>
        <position position="301"/>
    </location>
</feature>
<feature type="modified residue" description="Phosphoserine" evidence="3">
    <location>
        <position position="309"/>
    </location>
</feature>
<feature type="modified residue" description="N6-succinyllysine" evidence="12">
    <location>
        <position position="317"/>
    </location>
</feature>
<feature type="sequence conflict" description="In Ref. 2; AAH34173." evidence="7" ref="2">
    <original>H</original>
    <variation>Y</variation>
    <location>
        <position position="81"/>
    </location>
</feature>
<feature type="sequence conflict" description="In Ref. 1; AAL06323." evidence="7" ref="1">
    <original>AD</original>
    <variation>DH</variation>
    <location>
        <begin position="155"/>
        <end position="156"/>
    </location>
</feature>
<gene>
    <name evidence="9" type="primary">Aldob</name>
    <name type="synonym">Aldo2</name>
</gene>
<sequence>MAHRFPALTPEQKKELSEIAQRIVANGKGILAADESVGTMGNRLQRIKVENTEENRRQFRELLFSVDNSISQSIGGVILFHETLYQKDSQGNLFRNVLKEKGIVVGIKLDQGGAPLAGTNKETTIQGLDGLSERCAQYKKDGVDFGKWRAVLRIADQCPSSLAIQENANALARYASICQQNGLVPIVEPEVLPDGDHDLEHCQYVSEKVLAAVYKALNDHHVYLEGTLLKPNMVTAGHACTKKYTPEQVAMATVTALHRTVPAAVPGICFLSGGMSEEDATLNLNAINRCPLPRPWKLSFSYGRALQASALAAWGGKAANKKATQEAFMKRAMANCQAAQGQYVHTGSSGAAATQSLFTASYTY</sequence>
<proteinExistence type="evidence at protein level"/>